<organism>
    <name type="scientific">Mycobacterium tuberculosis (strain CDC 1551 / Oshkosh)</name>
    <dbReference type="NCBI Taxonomy" id="83331"/>
    <lineage>
        <taxon>Bacteria</taxon>
        <taxon>Bacillati</taxon>
        <taxon>Actinomycetota</taxon>
        <taxon>Actinomycetes</taxon>
        <taxon>Mycobacteriales</taxon>
        <taxon>Mycobacteriaceae</taxon>
        <taxon>Mycobacterium</taxon>
        <taxon>Mycobacterium tuberculosis complex</taxon>
    </lineage>
</organism>
<sequence length="383" mass="38755">MRALHVPAGSATALLLPALQRVLGGSDPALVAVPTQHESLLGALRVGEQIDDDVALVVTTSGTTGPPKGAMLTAAALTASASAAHDRLGGPGSWLLAVPPYHIAGLAVLVRSVIAGSVPVELNVSAGFDVTELPNAIKRLGSGRRYTSLVAAQLAKALTDPAATAALAELDAVLIGGGPAPRPILDAAAAAGITVVRTYGMSETSGGCVYDGVPLDGVRLRVLAGGRIAIGGATLAKGYRNPVSPDPFAEPGWFHTDDLGALESGDSGVLTVLGRADEAISTGGFTVLPQPVEAALGTHPAVRDCAVFGLADDRLGQRVVAAIVVGDGCPPPTLEALRAHVARTLDVTAAPRELHVVNVLPRRGIGKVDRAALVRRFAGEADQ</sequence>
<reference key="1">
    <citation type="journal article" date="2002" name="J. Bacteriol.">
        <title>Whole-genome comparison of Mycobacterium tuberculosis clinical and laboratory strains.</title>
        <authorList>
            <person name="Fleischmann R.D."/>
            <person name="Alland D."/>
            <person name="Eisen J.A."/>
            <person name="Carpenter L."/>
            <person name="White O."/>
            <person name="Peterson J.D."/>
            <person name="DeBoy R.T."/>
            <person name="Dodson R.J."/>
            <person name="Gwinn M.L."/>
            <person name="Haft D.H."/>
            <person name="Hickey E.K."/>
            <person name="Kolonay J.F."/>
            <person name="Nelson W.C."/>
            <person name="Umayam L.A."/>
            <person name="Ermolaeva M.D."/>
            <person name="Salzberg S.L."/>
            <person name="Delcher A."/>
            <person name="Utterback T.R."/>
            <person name="Weidman J.F."/>
            <person name="Khouri H.M."/>
            <person name="Gill J."/>
            <person name="Mikula A."/>
            <person name="Bishai W."/>
            <person name="Jacobs W.R. Jr."/>
            <person name="Venter J.C."/>
            <person name="Fraser C.M."/>
        </authorList>
    </citation>
    <scope>NUCLEOTIDE SEQUENCE [LARGE SCALE GENOMIC DNA]</scope>
    <source>
        <strain>CDC 1551 / Oshkosh</strain>
    </source>
</reference>
<dbReference type="EC" id="6.2.1.26"/>
<dbReference type="EMBL" id="AE000516">
    <property type="protein sequence ID" value="AAK44789.1"/>
    <property type="status" value="ALT_INIT"/>
    <property type="molecule type" value="Genomic_DNA"/>
</dbReference>
<dbReference type="PIR" id="A70547">
    <property type="entry name" value="A70547"/>
</dbReference>
<dbReference type="SMR" id="P9WQ38"/>
<dbReference type="KEGG" id="mtc:MT0567"/>
<dbReference type="HOGENOM" id="CLU_000022_59_3_11"/>
<dbReference type="UniPathway" id="UPA00079"/>
<dbReference type="UniPathway" id="UPA01057">
    <property type="reaction ID" value="UER00166"/>
</dbReference>
<dbReference type="Proteomes" id="UP000001020">
    <property type="component" value="Chromosome"/>
</dbReference>
<dbReference type="GO" id="GO:0005524">
    <property type="term" value="F:ATP binding"/>
    <property type="evidence" value="ECO:0007669"/>
    <property type="project" value="UniProtKB-KW"/>
</dbReference>
<dbReference type="GO" id="GO:0008756">
    <property type="term" value="F:o-succinylbenzoate-CoA ligase activity"/>
    <property type="evidence" value="ECO:0007669"/>
    <property type="project" value="UniProtKB-EC"/>
</dbReference>
<dbReference type="GO" id="GO:0009234">
    <property type="term" value="P:menaquinone biosynthetic process"/>
    <property type="evidence" value="ECO:0007669"/>
    <property type="project" value="UniProtKB-UniPathway"/>
</dbReference>
<dbReference type="CDD" id="cd17630">
    <property type="entry name" value="OSB_MenE-like"/>
    <property type="match status" value="1"/>
</dbReference>
<dbReference type="FunFam" id="3.30.300.30:FF:000051">
    <property type="entry name" value="O-succinylbenzoic acid--CoA ligase"/>
    <property type="match status" value="1"/>
</dbReference>
<dbReference type="FunFam" id="3.40.50.12780:FF:000088">
    <property type="entry name" value="Possible o-succinylbenzoic acid--CoA ligase menE"/>
    <property type="match status" value="1"/>
</dbReference>
<dbReference type="Gene3D" id="3.30.300.30">
    <property type="match status" value="1"/>
</dbReference>
<dbReference type="Gene3D" id="3.40.50.12780">
    <property type="entry name" value="N-terminal domain of ligase-like"/>
    <property type="match status" value="1"/>
</dbReference>
<dbReference type="InterPro" id="IPR025110">
    <property type="entry name" value="AMP-bd_C"/>
</dbReference>
<dbReference type="InterPro" id="IPR045851">
    <property type="entry name" value="AMP-bd_C_sf"/>
</dbReference>
<dbReference type="InterPro" id="IPR020845">
    <property type="entry name" value="AMP-binding_CS"/>
</dbReference>
<dbReference type="InterPro" id="IPR000873">
    <property type="entry name" value="AMP-dep_synth/lig_dom"/>
</dbReference>
<dbReference type="InterPro" id="IPR042099">
    <property type="entry name" value="ANL_N_sf"/>
</dbReference>
<dbReference type="InterPro" id="IPR050237">
    <property type="entry name" value="ATP-dep_AMP-bd_enzyme"/>
</dbReference>
<dbReference type="NCBIfam" id="NF005877">
    <property type="entry name" value="PRK07824.1"/>
    <property type="match status" value="1"/>
</dbReference>
<dbReference type="PANTHER" id="PTHR43767">
    <property type="entry name" value="LONG-CHAIN-FATTY-ACID--COA LIGASE"/>
    <property type="match status" value="1"/>
</dbReference>
<dbReference type="PANTHER" id="PTHR43767:SF1">
    <property type="entry name" value="NONRIBOSOMAL PEPTIDE SYNTHASE PES1 (EUROFUNG)-RELATED"/>
    <property type="match status" value="1"/>
</dbReference>
<dbReference type="Pfam" id="PF00501">
    <property type="entry name" value="AMP-binding"/>
    <property type="match status" value="1"/>
</dbReference>
<dbReference type="Pfam" id="PF13193">
    <property type="entry name" value="AMP-binding_C"/>
    <property type="match status" value="1"/>
</dbReference>
<dbReference type="SUPFAM" id="SSF56801">
    <property type="entry name" value="Acetyl-CoA synthetase-like"/>
    <property type="match status" value="1"/>
</dbReference>
<dbReference type="PROSITE" id="PS00455">
    <property type="entry name" value="AMP_BINDING"/>
    <property type="match status" value="1"/>
</dbReference>
<comment type="function">
    <text evidence="1">Converts 2-succinylbenzoate (OSB) to 2-succinylbenzoyl-CoA (OSB-CoA). May be involved in the biosynthesis of menaquinone (By similarity).</text>
</comment>
<comment type="catalytic activity">
    <reaction>
        <text>2-succinylbenzoate + ATP + CoA = 2-succinylbenzoyl-CoA + AMP + diphosphate</text>
        <dbReference type="Rhea" id="RHEA:17009"/>
        <dbReference type="ChEBI" id="CHEBI:18325"/>
        <dbReference type="ChEBI" id="CHEBI:30616"/>
        <dbReference type="ChEBI" id="CHEBI:33019"/>
        <dbReference type="ChEBI" id="CHEBI:57287"/>
        <dbReference type="ChEBI" id="CHEBI:57364"/>
        <dbReference type="ChEBI" id="CHEBI:456215"/>
        <dbReference type="EC" id="6.2.1.26"/>
    </reaction>
</comment>
<comment type="pathway">
    <text>Quinol/quinone metabolism; 1,4-dihydroxy-2-naphthoate biosynthesis; 1,4-dihydroxy-2-naphthoate from chorismate: step 5/7.</text>
</comment>
<comment type="pathway">
    <text>Quinol/quinone metabolism; menaquinone biosynthesis.</text>
</comment>
<comment type="similarity">
    <text evidence="3">Belongs to the ATP-dependent AMP-binding enzyme family. MenE subfamily.</text>
</comment>
<comment type="caution">
    <text evidence="2">The predicted start codon is CTG.</text>
</comment>
<comment type="sequence caution" evidence="2">
    <conflict type="erroneous initiation">
        <sequence resource="EMBL-CDS" id="AAK44789"/>
    </conflict>
    <text>Truncated N-terminus.</text>
</comment>
<proteinExistence type="inferred from homology"/>
<name>MENE_MYCTO</name>
<accession>P9WQ38</accession>
<accession>L0T3Z0</accession>
<accession>O06408</accession>
<accession>Q7D9P1</accession>
<keyword id="KW-0067">ATP-binding</keyword>
<keyword id="KW-0436">Ligase</keyword>
<keyword id="KW-0474">Menaquinone biosynthesis</keyword>
<keyword id="KW-0547">Nucleotide-binding</keyword>
<keyword id="KW-1185">Reference proteome</keyword>
<feature type="chain" id="PRO_0000426843" description="Probable 2-succinylbenzoate--CoA ligase">
    <location>
        <begin position="1"/>
        <end position="383"/>
    </location>
</feature>
<protein>
    <recommendedName>
        <fullName>Probable 2-succinylbenzoate--CoA ligase</fullName>
        <ecNumber>6.2.1.26</ecNumber>
    </recommendedName>
    <alternativeName>
        <fullName>OSB-CoA synthetase</fullName>
    </alternativeName>
    <alternativeName>
        <fullName>o-succinylbenzoyl-CoA synthetase</fullName>
    </alternativeName>
</protein>
<gene>
    <name type="primary">menE</name>
    <name type="ordered locus">MT0567</name>
</gene>
<evidence type="ECO:0000250" key="1"/>
<evidence type="ECO:0000250" key="2">
    <source>
        <dbReference type="UniProtKB" id="P9WQ39"/>
    </source>
</evidence>
<evidence type="ECO:0000305" key="3"/>